<keyword id="KW-0007">Acetylation</keyword>
<keyword id="KW-0175">Coiled coil</keyword>
<keyword id="KW-0963">Cytoplasm</keyword>
<keyword id="KW-0539">Nucleus</keyword>
<keyword id="KW-0653">Protein transport</keyword>
<keyword id="KW-1267">Proteomics identification</keyword>
<keyword id="KW-1185">Reference proteome</keyword>
<keyword id="KW-0677">Repeat</keyword>
<keyword id="KW-0813">Transport</keyword>
<evidence type="ECO:0000250" key="1"/>
<evidence type="ECO:0000255" key="2"/>
<evidence type="ECO:0000305" key="3"/>
<evidence type="ECO:0007744" key="4">
    <source>
    </source>
</evidence>
<organism>
    <name type="scientific">Homo sapiens</name>
    <name type="common">Human</name>
    <dbReference type="NCBI Taxonomy" id="9606"/>
    <lineage>
        <taxon>Eukaryota</taxon>
        <taxon>Metazoa</taxon>
        <taxon>Chordata</taxon>
        <taxon>Craniata</taxon>
        <taxon>Vertebrata</taxon>
        <taxon>Euteleostomi</taxon>
        <taxon>Mammalia</taxon>
        <taxon>Eutheria</taxon>
        <taxon>Euarchontoglires</taxon>
        <taxon>Primates</taxon>
        <taxon>Haplorrhini</taxon>
        <taxon>Catarrhini</taxon>
        <taxon>Hominidae</taxon>
        <taxon>Homo</taxon>
    </lineage>
</organism>
<protein>
    <recommendedName>
        <fullName>Ran-binding protein 6</fullName>
        <shortName>RanBP6</shortName>
    </recommendedName>
</protein>
<feature type="initiator methionine" description="Removed" evidence="4">
    <location>
        <position position="1"/>
    </location>
</feature>
<feature type="chain" id="PRO_0000120779" description="Ran-binding protein 6">
    <location>
        <begin position="2"/>
        <end position="1105"/>
    </location>
</feature>
<feature type="repeat" description="HEAT 1">
    <location>
        <begin position="219"/>
        <end position="257"/>
    </location>
</feature>
<feature type="repeat" description="HEAT 2">
    <location>
        <begin position="361"/>
        <end position="399"/>
    </location>
</feature>
<feature type="repeat" description="HEAT 3">
    <location>
        <begin position="402"/>
        <end position="440"/>
    </location>
</feature>
<feature type="repeat" description="HEAT 4">
    <location>
        <begin position="444"/>
        <end position="483"/>
    </location>
</feature>
<feature type="repeat" description="HEAT 5">
    <location>
        <begin position="866"/>
        <end position="905"/>
    </location>
</feature>
<feature type="repeat" description="HEAT 6">
    <location>
        <begin position="908"/>
        <end position="946"/>
    </location>
</feature>
<feature type="repeat" description="HEAT 7">
    <location>
        <begin position="949"/>
        <end position="987"/>
    </location>
</feature>
<feature type="region of interest" description="Ran-GTP binding" evidence="1">
    <location>
        <begin position="333"/>
        <end position="383"/>
    </location>
</feature>
<feature type="coiled-coil region" evidence="2">
    <location>
        <begin position="806"/>
        <end position="842"/>
    </location>
</feature>
<feature type="modified residue" description="N-acetylalanine" evidence="4">
    <location>
        <position position="2"/>
    </location>
</feature>
<feature type="sequence conflict" description="In Ref. 1; AAC14260." evidence="3" ref="1">
    <original>A</original>
    <variation>P</variation>
    <location>
        <position position="2"/>
    </location>
</feature>
<dbReference type="EMBL" id="AF039023">
    <property type="protein sequence ID" value="AAC14260.1"/>
    <property type="molecule type" value="mRNA"/>
</dbReference>
<dbReference type="EMBL" id="BX537405">
    <property type="protein sequence ID" value="CAD97647.1"/>
    <property type="status" value="ALT_INIT"/>
    <property type="molecule type" value="mRNA"/>
</dbReference>
<dbReference type="EMBL" id="AL162384">
    <property type="status" value="NOT_ANNOTATED_CDS"/>
    <property type="molecule type" value="Genomic_DNA"/>
</dbReference>
<dbReference type="EMBL" id="BC012805">
    <property type="protein sequence ID" value="AAH12805.2"/>
    <property type="molecule type" value="mRNA"/>
</dbReference>
<dbReference type="EMBL" id="BC098406">
    <property type="protein sequence ID" value="AAH98406.1"/>
    <property type="molecule type" value="mRNA"/>
</dbReference>
<dbReference type="CCDS" id="CCDS6467.1"/>
<dbReference type="RefSeq" id="NP_001230131.1">
    <property type="nucleotide sequence ID" value="NM_001243202.1"/>
</dbReference>
<dbReference type="RefSeq" id="NP_001230132.1">
    <property type="nucleotide sequence ID" value="NM_001243203.1"/>
</dbReference>
<dbReference type="RefSeq" id="NP_036548.1">
    <property type="nucleotide sequence ID" value="NM_012416.4"/>
</dbReference>
<dbReference type="SMR" id="O60518"/>
<dbReference type="BioGRID" id="117924">
    <property type="interactions" value="113"/>
</dbReference>
<dbReference type="FunCoup" id="O60518">
    <property type="interactions" value="4386"/>
</dbReference>
<dbReference type="IntAct" id="O60518">
    <property type="interactions" value="74"/>
</dbReference>
<dbReference type="MINT" id="O60518"/>
<dbReference type="STRING" id="9606.ENSP00000259569"/>
<dbReference type="GlyGen" id="O60518">
    <property type="glycosylation" value="1 site, 1 O-linked glycan (1 site)"/>
</dbReference>
<dbReference type="iPTMnet" id="O60518"/>
<dbReference type="PhosphoSitePlus" id="O60518"/>
<dbReference type="SwissPalm" id="O60518"/>
<dbReference type="BioMuta" id="RANBP6"/>
<dbReference type="jPOST" id="O60518"/>
<dbReference type="MassIVE" id="O60518"/>
<dbReference type="PaxDb" id="9606-ENSP00000259569"/>
<dbReference type="PeptideAtlas" id="O60518"/>
<dbReference type="ProteomicsDB" id="49455"/>
<dbReference type="Pumba" id="O60518"/>
<dbReference type="Antibodypedia" id="24215">
    <property type="antibodies" value="105 antibodies from 27 providers"/>
</dbReference>
<dbReference type="DNASU" id="26953"/>
<dbReference type="Ensembl" id="ENST00000259569.6">
    <property type="protein sequence ID" value="ENSP00000259569.5"/>
    <property type="gene ID" value="ENSG00000137040.10"/>
</dbReference>
<dbReference type="GeneID" id="26953"/>
<dbReference type="KEGG" id="hsa:26953"/>
<dbReference type="MANE-Select" id="ENST00000259569.6">
    <property type="protein sequence ID" value="ENSP00000259569.5"/>
    <property type="RefSeq nucleotide sequence ID" value="NM_012416.4"/>
    <property type="RefSeq protein sequence ID" value="NP_036548.1"/>
</dbReference>
<dbReference type="UCSC" id="uc003zjr.4">
    <property type="organism name" value="human"/>
</dbReference>
<dbReference type="AGR" id="HGNC:9851"/>
<dbReference type="CTD" id="26953"/>
<dbReference type="DisGeNET" id="26953"/>
<dbReference type="GeneCards" id="RANBP6"/>
<dbReference type="HGNC" id="HGNC:9851">
    <property type="gene designation" value="RANBP6"/>
</dbReference>
<dbReference type="HPA" id="ENSG00000137040">
    <property type="expression patterns" value="Low tissue specificity"/>
</dbReference>
<dbReference type="neXtProt" id="NX_O60518"/>
<dbReference type="OpenTargets" id="ENSG00000137040"/>
<dbReference type="PharmGKB" id="PA34212"/>
<dbReference type="VEuPathDB" id="HostDB:ENSG00000137040"/>
<dbReference type="eggNOG" id="KOG2171">
    <property type="taxonomic scope" value="Eukaryota"/>
</dbReference>
<dbReference type="GeneTree" id="ENSGT00940000162767"/>
<dbReference type="HOGENOM" id="CLU_003794_0_0_1"/>
<dbReference type="InParanoid" id="O60518"/>
<dbReference type="OMA" id="NDSCYQD"/>
<dbReference type="OrthoDB" id="543373at2759"/>
<dbReference type="PAN-GO" id="O60518">
    <property type="GO annotations" value="5 GO annotations based on evolutionary models"/>
</dbReference>
<dbReference type="PhylomeDB" id="O60518"/>
<dbReference type="TreeFam" id="TF300344"/>
<dbReference type="PathwayCommons" id="O60518"/>
<dbReference type="SignaLink" id="O60518"/>
<dbReference type="BioGRID-ORCS" id="26953">
    <property type="hits" value="20 hits in 1160 CRISPR screens"/>
</dbReference>
<dbReference type="CD-CODE" id="91857CE7">
    <property type="entry name" value="Nucleolus"/>
</dbReference>
<dbReference type="ChiTaRS" id="RANBP6">
    <property type="organism name" value="human"/>
</dbReference>
<dbReference type="GenomeRNAi" id="26953"/>
<dbReference type="Pharos" id="O60518">
    <property type="development level" value="Tdark"/>
</dbReference>
<dbReference type="PRO" id="PR:O60518"/>
<dbReference type="Proteomes" id="UP000005640">
    <property type="component" value="Chromosome 9"/>
</dbReference>
<dbReference type="RNAct" id="O60518">
    <property type="molecule type" value="protein"/>
</dbReference>
<dbReference type="Bgee" id="ENSG00000137040">
    <property type="expression patterns" value="Expressed in endothelial cell and 210 other cell types or tissues"/>
</dbReference>
<dbReference type="ExpressionAtlas" id="O60518">
    <property type="expression patterns" value="baseline and differential"/>
</dbReference>
<dbReference type="GO" id="GO:0005737">
    <property type="term" value="C:cytoplasm"/>
    <property type="evidence" value="ECO:0000318"/>
    <property type="project" value="GO_Central"/>
</dbReference>
<dbReference type="GO" id="GO:0005739">
    <property type="term" value="C:mitochondrion"/>
    <property type="evidence" value="ECO:0006056"/>
    <property type="project" value="FlyBase"/>
</dbReference>
<dbReference type="GO" id="GO:0005634">
    <property type="term" value="C:nucleus"/>
    <property type="evidence" value="ECO:0000318"/>
    <property type="project" value="GO_Central"/>
</dbReference>
<dbReference type="GO" id="GO:0045202">
    <property type="term" value="C:synapse"/>
    <property type="evidence" value="ECO:0007669"/>
    <property type="project" value="Ensembl"/>
</dbReference>
<dbReference type="GO" id="GO:0061608">
    <property type="term" value="F:nuclear import signal receptor activity"/>
    <property type="evidence" value="ECO:0000318"/>
    <property type="project" value="GO_Central"/>
</dbReference>
<dbReference type="GO" id="GO:0008139">
    <property type="term" value="F:nuclear localization sequence binding"/>
    <property type="evidence" value="ECO:0000318"/>
    <property type="project" value="GO_Central"/>
</dbReference>
<dbReference type="GO" id="GO:0006606">
    <property type="term" value="P:protein import into nucleus"/>
    <property type="evidence" value="ECO:0000318"/>
    <property type="project" value="GO_Central"/>
</dbReference>
<dbReference type="FunFam" id="1.25.10.10:FF:000415">
    <property type="entry name" value="Importin 5"/>
    <property type="match status" value="1"/>
</dbReference>
<dbReference type="Gene3D" id="1.25.10.10">
    <property type="entry name" value="Leucine-rich Repeat Variant"/>
    <property type="match status" value="1"/>
</dbReference>
<dbReference type="InterPro" id="IPR011989">
    <property type="entry name" value="ARM-like"/>
</dbReference>
<dbReference type="InterPro" id="IPR016024">
    <property type="entry name" value="ARM-type_fold"/>
</dbReference>
<dbReference type="InterPro" id="IPR000357">
    <property type="entry name" value="HEAT"/>
</dbReference>
<dbReference type="InterPro" id="IPR040122">
    <property type="entry name" value="Importin_beta"/>
</dbReference>
<dbReference type="InterPro" id="IPR041653">
    <property type="entry name" value="Importin_rep_4"/>
</dbReference>
<dbReference type="InterPro" id="IPR041389">
    <property type="entry name" value="Importin_rep_6"/>
</dbReference>
<dbReference type="PANTHER" id="PTHR10527">
    <property type="entry name" value="IMPORTIN BETA"/>
    <property type="match status" value="1"/>
</dbReference>
<dbReference type="Pfam" id="PF02985">
    <property type="entry name" value="HEAT"/>
    <property type="match status" value="1"/>
</dbReference>
<dbReference type="Pfam" id="PF13513">
    <property type="entry name" value="HEAT_EZ"/>
    <property type="match status" value="1"/>
</dbReference>
<dbReference type="Pfam" id="PF18808">
    <property type="entry name" value="Importin_rep_4"/>
    <property type="match status" value="1"/>
</dbReference>
<dbReference type="Pfam" id="PF18829">
    <property type="entry name" value="Importin_rep_6"/>
    <property type="match status" value="1"/>
</dbReference>
<dbReference type="SUPFAM" id="SSF48371">
    <property type="entry name" value="ARM repeat"/>
    <property type="match status" value="1"/>
</dbReference>
<reference key="1">
    <citation type="submission" date="1997-12" db="EMBL/GenBank/DDBJ databases">
        <authorList>
            <person name="Goerlich D."/>
            <person name="Prehn S."/>
            <person name="Hartmann E."/>
        </authorList>
    </citation>
    <scope>NUCLEOTIDE SEQUENCE [MRNA]</scope>
</reference>
<reference key="2">
    <citation type="journal article" date="2007" name="BMC Genomics">
        <title>The full-ORF clone resource of the German cDNA consortium.</title>
        <authorList>
            <person name="Bechtel S."/>
            <person name="Rosenfelder H."/>
            <person name="Duda A."/>
            <person name="Schmidt C.P."/>
            <person name="Ernst U."/>
            <person name="Wellenreuther R."/>
            <person name="Mehrle A."/>
            <person name="Schuster C."/>
            <person name="Bahr A."/>
            <person name="Bloecker H."/>
            <person name="Heubner D."/>
            <person name="Hoerlein A."/>
            <person name="Michel G."/>
            <person name="Wedler H."/>
            <person name="Koehrer K."/>
            <person name="Ottenwaelder B."/>
            <person name="Poustka A."/>
            <person name="Wiemann S."/>
            <person name="Schupp I."/>
        </authorList>
    </citation>
    <scope>NUCLEOTIDE SEQUENCE [LARGE SCALE MRNA]</scope>
    <source>
        <tissue>Endometrium</tissue>
    </source>
</reference>
<reference key="3">
    <citation type="journal article" date="2004" name="Nature">
        <title>DNA sequence and analysis of human chromosome 9.</title>
        <authorList>
            <person name="Humphray S.J."/>
            <person name="Oliver K."/>
            <person name="Hunt A.R."/>
            <person name="Plumb R.W."/>
            <person name="Loveland J.E."/>
            <person name="Howe K.L."/>
            <person name="Andrews T.D."/>
            <person name="Searle S."/>
            <person name="Hunt S.E."/>
            <person name="Scott C.E."/>
            <person name="Jones M.C."/>
            <person name="Ainscough R."/>
            <person name="Almeida J.P."/>
            <person name="Ambrose K.D."/>
            <person name="Ashwell R.I.S."/>
            <person name="Babbage A.K."/>
            <person name="Babbage S."/>
            <person name="Bagguley C.L."/>
            <person name="Bailey J."/>
            <person name="Banerjee R."/>
            <person name="Barker D.J."/>
            <person name="Barlow K.F."/>
            <person name="Bates K."/>
            <person name="Beasley H."/>
            <person name="Beasley O."/>
            <person name="Bird C.P."/>
            <person name="Bray-Allen S."/>
            <person name="Brown A.J."/>
            <person name="Brown J.Y."/>
            <person name="Burford D."/>
            <person name="Burrill W."/>
            <person name="Burton J."/>
            <person name="Carder C."/>
            <person name="Carter N.P."/>
            <person name="Chapman J.C."/>
            <person name="Chen Y."/>
            <person name="Clarke G."/>
            <person name="Clark S.Y."/>
            <person name="Clee C.M."/>
            <person name="Clegg S."/>
            <person name="Collier R.E."/>
            <person name="Corby N."/>
            <person name="Crosier M."/>
            <person name="Cummings A.T."/>
            <person name="Davies J."/>
            <person name="Dhami P."/>
            <person name="Dunn M."/>
            <person name="Dutta I."/>
            <person name="Dyer L.W."/>
            <person name="Earthrowl M.E."/>
            <person name="Faulkner L."/>
            <person name="Fleming C.J."/>
            <person name="Frankish A."/>
            <person name="Frankland J.A."/>
            <person name="French L."/>
            <person name="Fricker D.G."/>
            <person name="Garner P."/>
            <person name="Garnett J."/>
            <person name="Ghori J."/>
            <person name="Gilbert J.G.R."/>
            <person name="Glison C."/>
            <person name="Grafham D.V."/>
            <person name="Gribble S."/>
            <person name="Griffiths C."/>
            <person name="Griffiths-Jones S."/>
            <person name="Grocock R."/>
            <person name="Guy J."/>
            <person name="Hall R.E."/>
            <person name="Hammond S."/>
            <person name="Harley J.L."/>
            <person name="Harrison E.S.I."/>
            <person name="Hart E.A."/>
            <person name="Heath P.D."/>
            <person name="Henderson C.D."/>
            <person name="Hopkins B.L."/>
            <person name="Howard P.J."/>
            <person name="Howden P.J."/>
            <person name="Huckle E."/>
            <person name="Johnson C."/>
            <person name="Johnson D."/>
            <person name="Joy A.A."/>
            <person name="Kay M."/>
            <person name="Keenan S."/>
            <person name="Kershaw J.K."/>
            <person name="Kimberley A.M."/>
            <person name="King A."/>
            <person name="Knights A."/>
            <person name="Laird G.K."/>
            <person name="Langford C."/>
            <person name="Lawlor S."/>
            <person name="Leongamornlert D.A."/>
            <person name="Leversha M."/>
            <person name="Lloyd C."/>
            <person name="Lloyd D.M."/>
            <person name="Lovell J."/>
            <person name="Martin S."/>
            <person name="Mashreghi-Mohammadi M."/>
            <person name="Matthews L."/>
            <person name="McLaren S."/>
            <person name="McLay K.E."/>
            <person name="McMurray A."/>
            <person name="Milne S."/>
            <person name="Nickerson T."/>
            <person name="Nisbett J."/>
            <person name="Nordsiek G."/>
            <person name="Pearce A.V."/>
            <person name="Peck A.I."/>
            <person name="Porter K.M."/>
            <person name="Pandian R."/>
            <person name="Pelan S."/>
            <person name="Phillimore B."/>
            <person name="Povey S."/>
            <person name="Ramsey Y."/>
            <person name="Rand V."/>
            <person name="Scharfe M."/>
            <person name="Sehra H.K."/>
            <person name="Shownkeen R."/>
            <person name="Sims S.K."/>
            <person name="Skuce C.D."/>
            <person name="Smith M."/>
            <person name="Steward C.A."/>
            <person name="Swarbreck D."/>
            <person name="Sycamore N."/>
            <person name="Tester J."/>
            <person name="Thorpe A."/>
            <person name="Tracey A."/>
            <person name="Tromans A."/>
            <person name="Thomas D.W."/>
            <person name="Wall M."/>
            <person name="Wallis J.M."/>
            <person name="West A.P."/>
            <person name="Whitehead S.L."/>
            <person name="Willey D.L."/>
            <person name="Williams S.A."/>
            <person name="Wilming L."/>
            <person name="Wray P.W."/>
            <person name="Young L."/>
            <person name="Ashurst J.L."/>
            <person name="Coulson A."/>
            <person name="Blocker H."/>
            <person name="Durbin R.M."/>
            <person name="Sulston J.E."/>
            <person name="Hubbard T."/>
            <person name="Jackson M.J."/>
            <person name="Bentley D.R."/>
            <person name="Beck S."/>
            <person name="Rogers J."/>
            <person name="Dunham I."/>
        </authorList>
    </citation>
    <scope>NUCLEOTIDE SEQUENCE [LARGE SCALE GENOMIC DNA]</scope>
</reference>
<reference key="4">
    <citation type="journal article" date="2004" name="Genome Res.">
        <title>The status, quality, and expansion of the NIH full-length cDNA project: the Mammalian Gene Collection (MGC).</title>
        <authorList>
            <consortium name="The MGC Project Team"/>
        </authorList>
    </citation>
    <scope>NUCLEOTIDE SEQUENCE [LARGE SCALE MRNA]</scope>
    <source>
        <tissue>Kidney</tissue>
        <tissue>Placenta</tissue>
    </source>
</reference>
<reference key="5">
    <citation type="journal article" date="2009" name="Anal. Chem.">
        <title>Lys-N and trypsin cover complementary parts of the phosphoproteome in a refined SCX-based approach.</title>
        <authorList>
            <person name="Gauci S."/>
            <person name="Helbig A.O."/>
            <person name="Slijper M."/>
            <person name="Krijgsveld J."/>
            <person name="Heck A.J."/>
            <person name="Mohammed S."/>
        </authorList>
    </citation>
    <scope>ACETYLATION [LARGE SCALE ANALYSIS] AT ALA-2</scope>
    <scope>CLEAVAGE OF INITIATOR METHIONINE [LARGE SCALE ANALYSIS]</scope>
    <scope>IDENTIFICATION BY MASS SPECTROMETRY [LARGE SCALE ANALYSIS]</scope>
</reference>
<proteinExistence type="evidence at protein level"/>
<comment type="function">
    <text>May function in nuclear protein import as nuclear transport receptor.</text>
</comment>
<comment type="interaction">
    <interactant intactId="EBI-1055771">
        <id>O60518</id>
    </interactant>
    <interactant intactId="EBI-6248077">
        <id>Q76353</id>
    </interactant>
    <organismsDiffer>true</organismsDiffer>
    <experiments>2</experiments>
</comment>
<comment type="subcellular location">
    <subcellularLocation>
        <location evidence="1">Cytoplasm</location>
    </subcellularLocation>
    <subcellularLocation>
        <location evidence="1">Nucleus</location>
    </subcellularLocation>
</comment>
<comment type="similarity">
    <text evidence="3">Belongs to the importin beta family.</text>
</comment>
<comment type="sequence caution" evidence="3">
    <conflict type="erroneous initiation">
        <sequence resource="EMBL-CDS" id="CAD97647"/>
    </conflict>
</comment>
<name>RNBP6_HUMAN</name>
<accession>O60518</accession>
<accession>Q5T7X4</accession>
<accession>Q7Z3V2</accession>
<accession>Q96E78</accession>
<gene>
    <name type="primary">RANBP6</name>
</gene>
<sequence length="1105" mass="124714">MAATASAGVPATVSEKQEFYQLLKNLINPSCMVRRQAEEIYENIPGLCKTTFLLDAVRNRRAGYEVRQMAAALLRRLLSSGFEEVYPNLPADVQRDVKIELILAVKLETHASMRKKLCDIFAVLARNLIDEDGTNHWPEGLKFLIDSIYSKNVVLWEVALHVFWHFPGIFGTQERHDLDIIKRLLDQCIQDQEHPAIRTLSARAAAAFVLANENNIALFKDFADLLPGILQAVNDSCYQDDDSVLESLVEIADTVPKYLGPYLEDTLQLSLKLCGDSRLSNLQRQLALEVIVTLSETATPMLKKHTNIIAQAVPHILAMMVDLQDDEDWVNADEMEEDDFDSNAVAAESALDRLACGLGGKVVLPMTKEHIMQMLQSPDWKYRHAGLMALSAIGEGCHQQMESILDETVNSVLLFLQDPHPRVRAAACTTLGQMATDFAPNFQKKFHETVIAALLRTMENQGNQRVQSHAASALIIFIEDCPKSLLVLYVDSMVKNLHSVLVIKLQELIRNGTKLALEQLVTTIASVADTIEEKFVPYYDIFMPSLKHIVELAVQKELKLLRGKTIECISHIGLAVGKEKFMQDASNVMQLLLKTQSDLNNMEDDDPQTSYMVSAWARMCKILGKDFQQYLPLVIEPLIKTASAKPDVALLDTQDVENMSDDDGWQFVNLGDQQSFGIKTSGLEAKATACQMLVYYAKELREGFVEYTEQVVKLMVPLLKFYFHDNVRVAAAESMPFLLECARIRGPEYLAQMWQFICDPLIKAIGTEPDTDVLSEIMNSFAKSIEVMGDGCLNDEHLEELGGILKAKLEGHFKNQELRQVKRQEENYDQQVEMSLQDEDECDVYILTKVSDILHSLFSTYKEKILPWFEQLLPLIVNLICSSRPWPDRQWGLCIFDDIIEHCSPTSFKYVEYFRWPMLLNMRDNNPEVRQAAAYGLGVMAQFGGDDYRSLCSEAVPLLVKVIKCANSKTKKNVIATENCISAIGKILKFKPNCVNVDEVLPHWLSWLPLHEDKEEAIQTLSFLCDLIESNHPVVIGPNNSNLPKIISIIAEGKINETINYEDPCAKRLANVVRQVQTSEDLWLECVSQLDDEQQEALQELLNFA</sequence>